<keyword id="KW-0175">Coiled coil</keyword>
<keyword id="KW-0403">Intermediate filament</keyword>
<keyword id="KW-0416">Keratin</keyword>
<keyword id="KW-0488">Methylation</keyword>
<keyword id="KW-1185">Reference proteome</keyword>
<comment type="subunit">
    <text>Heterotetramer of two type I and two type II keratins. keratin-4 is generally associated with keratin-13.</text>
</comment>
<comment type="miscellaneous">
    <text>There are two types of cytoskeletal and microfibrillar keratin: I (acidic; 40-55 kDa) and II (neutral to basic; 56-70 kDa).</text>
</comment>
<comment type="similarity">
    <text evidence="4">Belongs to the intermediate filament family.</text>
</comment>
<gene>
    <name evidence="2" type="primary">Krt4</name>
    <name evidence="9" type="synonym">Kb4</name>
</gene>
<name>K2C4_RAT</name>
<reference evidence="7" key="1">
    <citation type="journal article" date="2004" name="Nature">
        <title>Genome sequence of the Brown Norway rat yields insights into mammalian evolution.</title>
        <authorList>
            <person name="Gibbs R.A."/>
            <person name="Weinstock G.M."/>
            <person name="Metzker M.L."/>
            <person name="Muzny D.M."/>
            <person name="Sodergren E.J."/>
            <person name="Scherer S."/>
            <person name="Scott G."/>
            <person name="Steffen D."/>
            <person name="Worley K.C."/>
            <person name="Burch P.E."/>
            <person name="Okwuonu G."/>
            <person name="Hines S."/>
            <person name="Lewis L."/>
            <person name="Deramo C."/>
            <person name="Delgado O."/>
            <person name="Dugan-Rocha S."/>
            <person name="Miner G."/>
            <person name="Morgan M."/>
            <person name="Hawes A."/>
            <person name="Gill R."/>
            <person name="Holt R.A."/>
            <person name="Adams M.D."/>
            <person name="Amanatides P.G."/>
            <person name="Baden-Tillson H."/>
            <person name="Barnstead M."/>
            <person name="Chin S."/>
            <person name="Evans C.A."/>
            <person name="Ferriera S."/>
            <person name="Fosler C."/>
            <person name="Glodek A."/>
            <person name="Gu Z."/>
            <person name="Jennings D."/>
            <person name="Kraft C.L."/>
            <person name="Nguyen T."/>
            <person name="Pfannkoch C.M."/>
            <person name="Sitter C."/>
            <person name="Sutton G.G."/>
            <person name="Venter J.C."/>
            <person name="Woodage T."/>
            <person name="Smith D."/>
            <person name="Lee H.-M."/>
            <person name="Gustafson E."/>
            <person name="Cahill P."/>
            <person name="Kana A."/>
            <person name="Doucette-Stamm L."/>
            <person name="Weinstock K."/>
            <person name="Fechtel K."/>
            <person name="Weiss R.B."/>
            <person name="Dunn D.M."/>
            <person name="Green E.D."/>
            <person name="Blakesley R.W."/>
            <person name="Bouffard G.G."/>
            <person name="De Jong P.J."/>
            <person name="Osoegawa K."/>
            <person name="Zhu B."/>
            <person name="Marra M."/>
            <person name="Schein J."/>
            <person name="Bosdet I."/>
            <person name="Fjell C."/>
            <person name="Jones S."/>
            <person name="Krzywinski M."/>
            <person name="Mathewson C."/>
            <person name="Siddiqui A."/>
            <person name="Wye N."/>
            <person name="McPherson J."/>
            <person name="Zhao S."/>
            <person name="Fraser C.M."/>
            <person name="Shetty J."/>
            <person name="Shatsman S."/>
            <person name="Geer K."/>
            <person name="Chen Y."/>
            <person name="Abramzon S."/>
            <person name="Nierman W.C."/>
            <person name="Havlak P.H."/>
            <person name="Chen R."/>
            <person name="Durbin K.J."/>
            <person name="Egan A."/>
            <person name="Ren Y."/>
            <person name="Song X.-Z."/>
            <person name="Li B."/>
            <person name="Liu Y."/>
            <person name="Qin X."/>
            <person name="Cawley S."/>
            <person name="Cooney A.J."/>
            <person name="D'Souza L.M."/>
            <person name="Martin K."/>
            <person name="Wu J.Q."/>
            <person name="Gonzalez-Garay M.L."/>
            <person name="Jackson A.R."/>
            <person name="Kalafus K.J."/>
            <person name="McLeod M.P."/>
            <person name="Milosavljevic A."/>
            <person name="Virk D."/>
            <person name="Volkov A."/>
            <person name="Wheeler D.A."/>
            <person name="Zhang Z."/>
            <person name="Bailey J.A."/>
            <person name="Eichler E.E."/>
            <person name="Tuzun E."/>
            <person name="Birney E."/>
            <person name="Mongin E."/>
            <person name="Ureta-Vidal A."/>
            <person name="Woodwark C."/>
            <person name="Zdobnov E."/>
            <person name="Bork P."/>
            <person name="Suyama M."/>
            <person name="Torrents D."/>
            <person name="Alexandersson M."/>
            <person name="Trask B.J."/>
            <person name="Young J.M."/>
            <person name="Huang H."/>
            <person name="Wang H."/>
            <person name="Xing H."/>
            <person name="Daniels S."/>
            <person name="Gietzen D."/>
            <person name="Schmidt J."/>
            <person name="Stevens K."/>
            <person name="Vitt U."/>
            <person name="Wingrove J."/>
            <person name="Camara F."/>
            <person name="Mar Alba M."/>
            <person name="Abril J.F."/>
            <person name="Guigo R."/>
            <person name="Smit A."/>
            <person name="Dubchak I."/>
            <person name="Rubin E.M."/>
            <person name="Couronne O."/>
            <person name="Poliakov A."/>
            <person name="Huebner N."/>
            <person name="Ganten D."/>
            <person name="Goesele C."/>
            <person name="Hummel O."/>
            <person name="Kreitler T."/>
            <person name="Lee Y.-A."/>
            <person name="Monti J."/>
            <person name="Schulz H."/>
            <person name="Zimdahl H."/>
            <person name="Himmelbauer H."/>
            <person name="Lehrach H."/>
            <person name="Jacob H.J."/>
            <person name="Bromberg S."/>
            <person name="Gullings-Handley J."/>
            <person name="Jensen-Seaman M.I."/>
            <person name="Kwitek A.E."/>
            <person name="Lazar J."/>
            <person name="Pasko D."/>
            <person name="Tonellato P.J."/>
            <person name="Twigger S."/>
            <person name="Ponting C.P."/>
            <person name="Duarte J.M."/>
            <person name="Rice S."/>
            <person name="Goodstadt L."/>
            <person name="Beatson S.A."/>
            <person name="Emes R.D."/>
            <person name="Winter E.E."/>
            <person name="Webber C."/>
            <person name="Brandt P."/>
            <person name="Nyakatura G."/>
            <person name="Adetobi M."/>
            <person name="Chiaromonte F."/>
            <person name="Elnitski L."/>
            <person name="Eswara P."/>
            <person name="Hardison R.C."/>
            <person name="Hou M."/>
            <person name="Kolbe D."/>
            <person name="Makova K."/>
            <person name="Miller W."/>
            <person name="Nekrutenko A."/>
            <person name="Riemer C."/>
            <person name="Schwartz S."/>
            <person name="Taylor J."/>
            <person name="Yang S."/>
            <person name="Zhang Y."/>
            <person name="Lindpaintner K."/>
            <person name="Andrews T.D."/>
            <person name="Caccamo M."/>
            <person name="Clamp M."/>
            <person name="Clarke L."/>
            <person name="Curwen V."/>
            <person name="Durbin R.M."/>
            <person name="Eyras E."/>
            <person name="Searle S.M."/>
            <person name="Cooper G.M."/>
            <person name="Batzoglou S."/>
            <person name="Brudno M."/>
            <person name="Sidow A."/>
            <person name="Stone E.A."/>
            <person name="Payseur B.A."/>
            <person name="Bourque G."/>
            <person name="Lopez-Otin C."/>
            <person name="Puente X.S."/>
            <person name="Chakrabarti K."/>
            <person name="Chatterji S."/>
            <person name="Dewey C."/>
            <person name="Pachter L."/>
            <person name="Bray N."/>
            <person name="Yap V.B."/>
            <person name="Caspi A."/>
            <person name="Tesler G."/>
            <person name="Pevzner P.A."/>
            <person name="Haussler D."/>
            <person name="Roskin K.M."/>
            <person name="Baertsch R."/>
            <person name="Clawson H."/>
            <person name="Furey T.S."/>
            <person name="Hinrichs A.S."/>
            <person name="Karolchik D."/>
            <person name="Kent W.J."/>
            <person name="Rosenbloom K.R."/>
            <person name="Trumbower H."/>
            <person name="Weirauch M."/>
            <person name="Cooper D.N."/>
            <person name="Stenson P.D."/>
            <person name="Ma B."/>
            <person name="Brent M."/>
            <person name="Arumugam M."/>
            <person name="Shteynberg D."/>
            <person name="Copley R.R."/>
            <person name="Taylor M.S."/>
            <person name="Riethman H."/>
            <person name="Mudunuri U."/>
            <person name="Peterson J."/>
            <person name="Guyer M."/>
            <person name="Felsenfeld A."/>
            <person name="Old S."/>
            <person name="Mockrin S."/>
            <person name="Collins F.S."/>
        </authorList>
    </citation>
    <scope>NUCLEOTIDE SEQUENCE [LARGE SCALE GENOMIC DNA]</scope>
    <source>
        <strain evidence="6">Brown Norway</strain>
    </source>
</reference>
<reference evidence="7 8" key="2">
    <citation type="journal article" date="2004" name="Eur. J. Cell Biol.">
        <title>Comprehensive analysis of keratin gene clusters in humans and rodents.</title>
        <authorList>
            <person name="Hesse M."/>
            <person name="Zimek A."/>
            <person name="Weber K."/>
            <person name="Magin T.M."/>
        </authorList>
    </citation>
    <scope>IDENTIFICATION</scope>
</reference>
<protein>
    <recommendedName>
        <fullName>Keratin, type II cytoskeletal 4</fullName>
    </recommendedName>
    <alternativeName>
        <fullName>Cytokeratin-4</fullName>
        <shortName>CK-4</shortName>
    </alternativeName>
    <alternativeName>
        <fullName>Keratin-4</fullName>
        <shortName>K4</shortName>
    </alternativeName>
    <alternativeName>
        <fullName>Type-II keratin Kb4</fullName>
    </alternativeName>
</protein>
<organism>
    <name type="scientific">Rattus norvegicus</name>
    <name type="common">Rat</name>
    <dbReference type="NCBI Taxonomy" id="10116"/>
    <lineage>
        <taxon>Eukaryota</taxon>
        <taxon>Metazoa</taxon>
        <taxon>Chordata</taxon>
        <taxon>Craniata</taxon>
        <taxon>Vertebrata</taxon>
        <taxon>Euteleostomi</taxon>
        <taxon>Mammalia</taxon>
        <taxon>Eutheria</taxon>
        <taxon>Euarchontoglires</taxon>
        <taxon>Glires</taxon>
        <taxon>Rodentia</taxon>
        <taxon>Myomorpha</taxon>
        <taxon>Muroidea</taxon>
        <taxon>Muridae</taxon>
        <taxon>Murinae</taxon>
        <taxon>Rattus</taxon>
    </lineage>
</organism>
<feature type="chain" id="PRO_0000063724" description="Keratin, type II cytoskeletal 4">
    <location>
        <begin position="1"/>
        <end position="536"/>
    </location>
</feature>
<feature type="domain" description="IF rod" evidence="4">
    <location>
        <begin position="146"/>
        <end position="457"/>
    </location>
</feature>
<feature type="region of interest" description="Head" evidence="3">
    <location>
        <begin position="1"/>
        <end position="145"/>
    </location>
</feature>
<feature type="region of interest" description="Coil 1A" evidence="3">
    <location>
        <begin position="146"/>
        <end position="181"/>
    </location>
</feature>
<feature type="region of interest" description="Linker 1" evidence="3">
    <location>
        <begin position="182"/>
        <end position="200"/>
    </location>
</feature>
<feature type="region of interest" description="Coil 1B" evidence="3">
    <location>
        <begin position="201"/>
        <end position="293"/>
    </location>
</feature>
<feature type="region of interest" description="Linker 12" evidence="3">
    <location>
        <begin position="294"/>
        <end position="316"/>
    </location>
</feature>
<feature type="region of interest" description="Coil 2" evidence="3">
    <location>
        <begin position="317"/>
        <end position="454"/>
    </location>
</feature>
<feature type="region of interest" description="Tail" evidence="3">
    <location>
        <begin position="455"/>
        <end position="524"/>
    </location>
</feature>
<feature type="region of interest" description="Disordered" evidence="5">
    <location>
        <begin position="515"/>
        <end position="536"/>
    </location>
</feature>
<feature type="compositionally biased region" description="Basic and acidic residues" evidence="5">
    <location>
        <begin position="527"/>
        <end position="536"/>
    </location>
</feature>
<feature type="site" description="Stutter" evidence="3">
    <location>
        <position position="395"/>
    </location>
</feature>
<feature type="modified residue" description="Omega-N-methylarginine" evidence="1">
    <location>
        <position position="13"/>
    </location>
</feature>
<sequence>MISRQSSVRGVSRGFSSGSAVAGGVKRVAFSSASMSGGAGRCSSGGFGSRSLYNLGGHKSISMSVAGSCQGGGYGGAGGFGVGGYGAGFGAGGFGGGFGGSFNGRGGPGFPVCPAGGIQEVTINQSLLTPLQVEIDPEIQKIRTAEREQIKTLNNKFASFIDKVRFLEQQNKVLETKWNLLQQQTTTTSPRNLDPFFETYINALRKNLDTLSNDKGRLQSELKLMQDSVEDFKTKYEEEINKRTAAENDFVVLKKDVDAAYMIKVELEAKMESLKDEINFMRVLYEAELSQMQTHVSDTSVVLSMDNNRNLDLDGIIAEVRAQYEEIARKSKAEVESWYQIKVQQLQMSADQHGDSLKSTKNEISELNRMIQRIRSEIENIKKQTLQASVADAEQRGELALKDAYTKRADLETALQKAKEDLARLMRDYQELMNVKLALDVEIATYRKLLEGEECRMSGECKSAVSISVVGGSASIGGSGGIGLGLGSGFGSGSCSGSGFGFGGGIYGSSGTKITSSATITKRSPRTRQDPDGLQP</sequence>
<accession>Q6IG00</accession>
<dbReference type="EMBL" id="AABR03057015">
    <property type="status" value="NOT_ANNOTATED_CDS"/>
    <property type="molecule type" value="Genomic_DNA"/>
</dbReference>
<dbReference type="EMBL" id="BK003985">
    <property type="protein sequence ID" value="DAA02230.1"/>
    <property type="molecule type" value="mRNA"/>
</dbReference>
<dbReference type="RefSeq" id="NP_001008806.1">
    <property type="nucleotide sequence ID" value="NM_001008806.1"/>
</dbReference>
<dbReference type="SMR" id="Q6IG00"/>
<dbReference type="BioGRID" id="260992">
    <property type="interactions" value="1"/>
</dbReference>
<dbReference type="FunCoup" id="Q6IG00">
    <property type="interactions" value="104"/>
</dbReference>
<dbReference type="IntAct" id="Q6IG00">
    <property type="interactions" value="1"/>
</dbReference>
<dbReference type="STRING" id="10116.ENSRNOP00000012943"/>
<dbReference type="iPTMnet" id="Q6IG00"/>
<dbReference type="PhosphoSitePlus" id="Q6IG00"/>
<dbReference type="PaxDb" id="10116-ENSRNOP00000012943"/>
<dbReference type="GeneID" id="315323"/>
<dbReference type="KEGG" id="rno:315323"/>
<dbReference type="UCSC" id="RGD:1359272">
    <property type="organism name" value="rat"/>
</dbReference>
<dbReference type="AGR" id="RGD:1359272"/>
<dbReference type="CTD" id="3851"/>
<dbReference type="RGD" id="1359272">
    <property type="gene designation" value="Krt4"/>
</dbReference>
<dbReference type="eggNOG" id="ENOG502QURK">
    <property type="taxonomic scope" value="Eukaryota"/>
</dbReference>
<dbReference type="InParanoid" id="Q6IG00"/>
<dbReference type="OrthoDB" id="9450813at2759"/>
<dbReference type="PhylomeDB" id="Q6IG00"/>
<dbReference type="Reactome" id="R-RNO-6805567">
    <property type="pathway name" value="Keratinization"/>
</dbReference>
<dbReference type="Reactome" id="R-RNO-6809371">
    <property type="pathway name" value="Formation of the cornified envelope"/>
</dbReference>
<dbReference type="PRO" id="PR:Q6IG00"/>
<dbReference type="Proteomes" id="UP000002494">
    <property type="component" value="Chromosome 7"/>
</dbReference>
<dbReference type="Bgee" id="ENSRNOG00000032332">
    <property type="expression patterns" value="Expressed in esophagus and 13 other cell types or tissues"/>
</dbReference>
<dbReference type="ExpressionAtlas" id="Q6IG00">
    <property type="expression patterns" value="baseline and differential"/>
</dbReference>
<dbReference type="GO" id="GO:0009986">
    <property type="term" value="C:cell surface"/>
    <property type="evidence" value="ECO:0000266"/>
    <property type="project" value="RGD"/>
</dbReference>
<dbReference type="GO" id="GO:0045111">
    <property type="term" value="C:intermediate filament cytoskeleton"/>
    <property type="evidence" value="ECO:0000266"/>
    <property type="project" value="RGD"/>
</dbReference>
<dbReference type="GO" id="GO:0045095">
    <property type="term" value="C:keratin filament"/>
    <property type="evidence" value="ECO:0000266"/>
    <property type="project" value="RGD"/>
</dbReference>
<dbReference type="GO" id="GO:0030280">
    <property type="term" value="F:structural constituent of skin epidermis"/>
    <property type="evidence" value="ECO:0000318"/>
    <property type="project" value="GO_Central"/>
</dbReference>
<dbReference type="GO" id="GO:0007010">
    <property type="term" value="P:cytoskeleton organization"/>
    <property type="evidence" value="ECO:0000266"/>
    <property type="project" value="RGD"/>
</dbReference>
<dbReference type="GO" id="GO:0030855">
    <property type="term" value="P:epithelial cell differentiation"/>
    <property type="evidence" value="ECO:0000250"/>
    <property type="project" value="UniProtKB"/>
</dbReference>
<dbReference type="GO" id="GO:0045109">
    <property type="term" value="P:intermediate filament organization"/>
    <property type="evidence" value="ECO:0000318"/>
    <property type="project" value="GO_Central"/>
</dbReference>
<dbReference type="GO" id="GO:0031424">
    <property type="term" value="P:keratinization"/>
    <property type="evidence" value="ECO:0000318"/>
    <property type="project" value="GO_Central"/>
</dbReference>
<dbReference type="GO" id="GO:0050680">
    <property type="term" value="P:negative regulation of epithelial cell proliferation"/>
    <property type="evidence" value="ECO:0000250"/>
    <property type="project" value="UniProtKB"/>
</dbReference>
<dbReference type="FunFam" id="1.20.5.1160:FF:000001">
    <property type="entry name" value="Keratin type II"/>
    <property type="match status" value="1"/>
</dbReference>
<dbReference type="FunFam" id="1.20.5.170:FF:000004">
    <property type="entry name" value="Keratin, type II cytoskeletal 5"/>
    <property type="match status" value="1"/>
</dbReference>
<dbReference type="FunFam" id="1.20.5.500:FF:000001">
    <property type="entry name" value="Type II keratin 23"/>
    <property type="match status" value="1"/>
</dbReference>
<dbReference type="Gene3D" id="1.20.5.170">
    <property type="match status" value="1"/>
</dbReference>
<dbReference type="Gene3D" id="1.20.5.500">
    <property type="entry name" value="Single helix bin"/>
    <property type="match status" value="1"/>
</dbReference>
<dbReference type="Gene3D" id="1.20.5.1160">
    <property type="entry name" value="Vasodilator-stimulated phosphoprotein"/>
    <property type="match status" value="1"/>
</dbReference>
<dbReference type="InterPro" id="IPR018039">
    <property type="entry name" value="IF_conserved"/>
</dbReference>
<dbReference type="InterPro" id="IPR039008">
    <property type="entry name" value="IF_rod_dom"/>
</dbReference>
<dbReference type="InterPro" id="IPR032444">
    <property type="entry name" value="Keratin_2_head"/>
</dbReference>
<dbReference type="InterPro" id="IPR003054">
    <property type="entry name" value="Keratin_II"/>
</dbReference>
<dbReference type="PANTHER" id="PTHR45616">
    <property type="entry name" value="GATA-TYPE DOMAIN-CONTAINING PROTEIN"/>
    <property type="match status" value="1"/>
</dbReference>
<dbReference type="PANTHER" id="PTHR45616:SF3">
    <property type="entry name" value="KERATIN, TYPE II CYTOSKELETAL 4"/>
    <property type="match status" value="1"/>
</dbReference>
<dbReference type="Pfam" id="PF00038">
    <property type="entry name" value="Filament"/>
    <property type="match status" value="1"/>
</dbReference>
<dbReference type="Pfam" id="PF16208">
    <property type="entry name" value="Keratin_2_head"/>
    <property type="match status" value="1"/>
</dbReference>
<dbReference type="PRINTS" id="PR01276">
    <property type="entry name" value="TYPE2KERATIN"/>
</dbReference>
<dbReference type="SMART" id="SM01391">
    <property type="entry name" value="Filament"/>
    <property type="match status" value="1"/>
</dbReference>
<dbReference type="SUPFAM" id="SSF64593">
    <property type="entry name" value="Intermediate filament protein, coiled coil region"/>
    <property type="match status" value="2"/>
</dbReference>
<dbReference type="PROSITE" id="PS00226">
    <property type="entry name" value="IF_ROD_1"/>
    <property type="match status" value="1"/>
</dbReference>
<dbReference type="PROSITE" id="PS51842">
    <property type="entry name" value="IF_ROD_2"/>
    <property type="match status" value="1"/>
</dbReference>
<evidence type="ECO:0000250" key="1">
    <source>
        <dbReference type="UniProtKB" id="P07744"/>
    </source>
</evidence>
<evidence type="ECO:0000250" key="2">
    <source>
        <dbReference type="UniProtKB" id="P19013"/>
    </source>
</evidence>
<evidence type="ECO:0000255" key="3"/>
<evidence type="ECO:0000255" key="4">
    <source>
        <dbReference type="PROSITE-ProRule" id="PRU01188"/>
    </source>
</evidence>
<evidence type="ECO:0000256" key="5">
    <source>
        <dbReference type="SAM" id="MobiDB-lite"/>
    </source>
</evidence>
<evidence type="ECO:0000269" key="6">
    <source>
    </source>
</evidence>
<evidence type="ECO:0000305" key="7"/>
<evidence type="ECO:0000312" key="8">
    <source>
        <dbReference type="EMBL" id="DAA02230.1"/>
    </source>
</evidence>
<evidence type="ECO:0000312" key="9">
    <source>
        <dbReference type="RGD" id="1359272"/>
    </source>
</evidence>
<proteinExistence type="inferred from homology"/>